<keyword id="KW-0028">Amino-acid biosynthesis</keyword>
<keyword id="KW-0057">Aromatic amino acid biosynthesis</keyword>
<keyword id="KW-0170">Cobalt</keyword>
<keyword id="KW-0963">Cytoplasm</keyword>
<keyword id="KW-0456">Lyase</keyword>
<keyword id="KW-0479">Metal-binding</keyword>
<keyword id="KW-0520">NAD</keyword>
<keyword id="KW-0547">Nucleotide-binding</keyword>
<keyword id="KW-0862">Zinc</keyword>
<proteinExistence type="inferred from homology"/>
<organism>
    <name type="scientific">Synechococcus sp. (strain CC9605)</name>
    <dbReference type="NCBI Taxonomy" id="110662"/>
    <lineage>
        <taxon>Bacteria</taxon>
        <taxon>Bacillati</taxon>
        <taxon>Cyanobacteriota</taxon>
        <taxon>Cyanophyceae</taxon>
        <taxon>Synechococcales</taxon>
        <taxon>Synechococcaceae</taxon>
        <taxon>Synechococcus</taxon>
    </lineage>
</organism>
<protein>
    <recommendedName>
        <fullName evidence="1">3-dehydroquinate synthase</fullName>
        <shortName evidence="1">DHQS</shortName>
        <ecNumber evidence="1">4.2.3.4</ecNumber>
    </recommendedName>
</protein>
<name>AROB_SYNSC</name>
<comment type="function">
    <text evidence="1">Catalyzes the conversion of 3-deoxy-D-arabino-heptulosonate 7-phosphate (DAHP) to dehydroquinate (DHQ).</text>
</comment>
<comment type="catalytic activity">
    <reaction evidence="1">
        <text>7-phospho-2-dehydro-3-deoxy-D-arabino-heptonate = 3-dehydroquinate + phosphate</text>
        <dbReference type="Rhea" id="RHEA:21968"/>
        <dbReference type="ChEBI" id="CHEBI:32364"/>
        <dbReference type="ChEBI" id="CHEBI:43474"/>
        <dbReference type="ChEBI" id="CHEBI:58394"/>
        <dbReference type="EC" id="4.2.3.4"/>
    </reaction>
</comment>
<comment type="cofactor">
    <cofactor evidence="1">
        <name>Co(2+)</name>
        <dbReference type="ChEBI" id="CHEBI:48828"/>
    </cofactor>
    <cofactor evidence="1">
        <name>Zn(2+)</name>
        <dbReference type="ChEBI" id="CHEBI:29105"/>
    </cofactor>
    <text evidence="1">Binds 1 divalent metal cation per subunit. Can use either Co(2+) or Zn(2+).</text>
</comment>
<comment type="cofactor">
    <cofactor evidence="1">
        <name>NAD(+)</name>
        <dbReference type="ChEBI" id="CHEBI:57540"/>
    </cofactor>
</comment>
<comment type="pathway">
    <text evidence="1">Metabolic intermediate biosynthesis; chorismate biosynthesis; chorismate from D-erythrose 4-phosphate and phosphoenolpyruvate: step 2/7.</text>
</comment>
<comment type="subcellular location">
    <subcellularLocation>
        <location evidence="1">Cytoplasm</location>
    </subcellularLocation>
</comment>
<comment type="similarity">
    <text evidence="1">Belongs to the sugar phosphate cyclases superfamily. Dehydroquinate synthase family.</text>
</comment>
<evidence type="ECO:0000255" key="1">
    <source>
        <dbReference type="HAMAP-Rule" id="MF_00110"/>
    </source>
</evidence>
<sequence>MTTITPLHHIRVALERNPYEVVIGNGGLARLGQQMLDAGVQADRRVLVVSNPDVANPYGDACLNSLREAGFSVELLVIDAGEHQKTPATVAEIHDAAYSAKLERSSLMVALGGGVVGDMTGFAAATWLRGIQVVQVPTTLLAMVDASIGGKTGVNHPRGKNLIGAFHQPRLVLIDPSTLNTLPEREFRAGMAEVIKYGILGDTALFEELEACPDPSTPAGLGAERLSSILQRSAAAKARVVAADEKEGSLRAILNYGHTFGHVVETLCGYGTWLHGEAVAIGMVAVGELAVLRGSWSRDDAERQRRLIESAGLPTAWPDLSADAVLNSLQGDKKVRDGRLRFVMPTGIGSVEIRDDVSREEILSCLERLKG</sequence>
<gene>
    <name evidence="1" type="primary">aroB</name>
    <name type="ordered locus">Syncc9605_1450</name>
</gene>
<reference key="1">
    <citation type="submission" date="2005-07" db="EMBL/GenBank/DDBJ databases">
        <title>Complete sequence of Synechococcus sp. CC9605.</title>
        <authorList>
            <consortium name="US DOE Joint Genome Institute"/>
            <person name="Copeland A."/>
            <person name="Lucas S."/>
            <person name="Lapidus A."/>
            <person name="Barry K."/>
            <person name="Detter J.C."/>
            <person name="Glavina T."/>
            <person name="Hammon N."/>
            <person name="Israni S."/>
            <person name="Pitluck S."/>
            <person name="Schmutz J."/>
            <person name="Martinez M."/>
            <person name="Larimer F."/>
            <person name="Land M."/>
            <person name="Kyrpides N."/>
            <person name="Ivanova N."/>
            <person name="Richardson P."/>
        </authorList>
    </citation>
    <scope>NUCLEOTIDE SEQUENCE [LARGE SCALE GENOMIC DNA]</scope>
    <source>
        <strain>CC9605</strain>
    </source>
</reference>
<accession>Q3AJM8</accession>
<feature type="chain" id="PRO_1000094646" description="3-dehydroquinate synthase">
    <location>
        <begin position="1"/>
        <end position="371"/>
    </location>
</feature>
<feature type="binding site" evidence="1">
    <location>
        <begin position="114"/>
        <end position="118"/>
    </location>
    <ligand>
        <name>NAD(+)</name>
        <dbReference type="ChEBI" id="CHEBI:57540"/>
    </ligand>
</feature>
<feature type="binding site" evidence="1">
    <location>
        <begin position="138"/>
        <end position="139"/>
    </location>
    <ligand>
        <name>NAD(+)</name>
        <dbReference type="ChEBI" id="CHEBI:57540"/>
    </ligand>
</feature>
<feature type="binding site" evidence="1">
    <location>
        <position position="151"/>
    </location>
    <ligand>
        <name>NAD(+)</name>
        <dbReference type="ChEBI" id="CHEBI:57540"/>
    </ligand>
</feature>
<feature type="binding site" evidence="1">
    <location>
        <position position="160"/>
    </location>
    <ligand>
        <name>NAD(+)</name>
        <dbReference type="ChEBI" id="CHEBI:57540"/>
    </ligand>
</feature>
<feature type="binding site" evidence="1">
    <location>
        <begin position="178"/>
        <end position="181"/>
    </location>
    <ligand>
        <name>NAD(+)</name>
        <dbReference type="ChEBI" id="CHEBI:57540"/>
    </ligand>
</feature>
<feature type="binding site" evidence="1">
    <location>
        <position position="193"/>
    </location>
    <ligand>
        <name>Zn(2+)</name>
        <dbReference type="ChEBI" id="CHEBI:29105"/>
    </ligand>
</feature>
<feature type="binding site" evidence="1">
    <location>
        <position position="258"/>
    </location>
    <ligand>
        <name>Zn(2+)</name>
        <dbReference type="ChEBI" id="CHEBI:29105"/>
    </ligand>
</feature>
<feature type="binding site" evidence="1">
    <location>
        <position position="275"/>
    </location>
    <ligand>
        <name>Zn(2+)</name>
        <dbReference type="ChEBI" id="CHEBI:29105"/>
    </ligand>
</feature>
<dbReference type="EC" id="4.2.3.4" evidence="1"/>
<dbReference type="EMBL" id="CP000110">
    <property type="protein sequence ID" value="ABB35204.1"/>
    <property type="molecule type" value="Genomic_DNA"/>
</dbReference>
<dbReference type="RefSeq" id="WP_011364419.1">
    <property type="nucleotide sequence ID" value="NC_007516.1"/>
</dbReference>
<dbReference type="SMR" id="Q3AJM8"/>
<dbReference type="STRING" id="110662.Syncc9605_1450"/>
<dbReference type="KEGG" id="syd:Syncc9605_1450"/>
<dbReference type="eggNOG" id="COG0337">
    <property type="taxonomic scope" value="Bacteria"/>
</dbReference>
<dbReference type="HOGENOM" id="CLU_001201_0_2_3"/>
<dbReference type="OrthoDB" id="9806583at2"/>
<dbReference type="UniPathway" id="UPA00053">
    <property type="reaction ID" value="UER00085"/>
</dbReference>
<dbReference type="GO" id="GO:0005737">
    <property type="term" value="C:cytoplasm"/>
    <property type="evidence" value="ECO:0007669"/>
    <property type="project" value="UniProtKB-SubCell"/>
</dbReference>
<dbReference type="GO" id="GO:0003856">
    <property type="term" value="F:3-dehydroquinate synthase activity"/>
    <property type="evidence" value="ECO:0007669"/>
    <property type="project" value="UniProtKB-UniRule"/>
</dbReference>
<dbReference type="GO" id="GO:0046872">
    <property type="term" value="F:metal ion binding"/>
    <property type="evidence" value="ECO:0007669"/>
    <property type="project" value="UniProtKB-KW"/>
</dbReference>
<dbReference type="GO" id="GO:0000166">
    <property type="term" value="F:nucleotide binding"/>
    <property type="evidence" value="ECO:0007669"/>
    <property type="project" value="UniProtKB-KW"/>
</dbReference>
<dbReference type="GO" id="GO:0008652">
    <property type="term" value="P:amino acid biosynthetic process"/>
    <property type="evidence" value="ECO:0007669"/>
    <property type="project" value="UniProtKB-KW"/>
</dbReference>
<dbReference type="GO" id="GO:0009073">
    <property type="term" value="P:aromatic amino acid family biosynthetic process"/>
    <property type="evidence" value="ECO:0007669"/>
    <property type="project" value="UniProtKB-KW"/>
</dbReference>
<dbReference type="GO" id="GO:0009423">
    <property type="term" value="P:chorismate biosynthetic process"/>
    <property type="evidence" value="ECO:0007669"/>
    <property type="project" value="UniProtKB-UniRule"/>
</dbReference>
<dbReference type="CDD" id="cd08195">
    <property type="entry name" value="DHQS"/>
    <property type="match status" value="1"/>
</dbReference>
<dbReference type="FunFam" id="3.40.50.1970:FF:000007">
    <property type="entry name" value="Pentafunctional AROM polypeptide"/>
    <property type="match status" value="1"/>
</dbReference>
<dbReference type="Gene3D" id="3.40.50.1970">
    <property type="match status" value="1"/>
</dbReference>
<dbReference type="Gene3D" id="1.20.1090.10">
    <property type="entry name" value="Dehydroquinate synthase-like - alpha domain"/>
    <property type="match status" value="1"/>
</dbReference>
<dbReference type="HAMAP" id="MF_00110">
    <property type="entry name" value="DHQ_synthase"/>
    <property type="match status" value="1"/>
</dbReference>
<dbReference type="InterPro" id="IPR050071">
    <property type="entry name" value="Dehydroquinate_synthase"/>
</dbReference>
<dbReference type="InterPro" id="IPR016037">
    <property type="entry name" value="DHQ_synth_AroB"/>
</dbReference>
<dbReference type="InterPro" id="IPR030963">
    <property type="entry name" value="DHQ_synth_fam"/>
</dbReference>
<dbReference type="InterPro" id="IPR030960">
    <property type="entry name" value="DHQS/DOIS_N"/>
</dbReference>
<dbReference type="InterPro" id="IPR056179">
    <property type="entry name" value="DHQS_C"/>
</dbReference>
<dbReference type="NCBIfam" id="TIGR01357">
    <property type="entry name" value="aroB"/>
    <property type="match status" value="1"/>
</dbReference>
<dbReference type="PANTHER" id="PTHR43622">
    <property type="entry name" value="3-DEHYDROQUINATE SYNTHASE"/>
    <property type="match status" value="1"/>
</dbReference>
<dbReference type="PANTHER" id="PTHR43622:SF7">
    <property type="entry name" value="3-DEHYDROQUINATE SYNTHASE, CHLOROPLASTIC"/>
    <property type="match status" value="1"/>
</dbReference>
<dbReference type="Pfam" id="PF01761">
    <property type="entry name" value="DHQ_synthase"/>
    <property type="match status" value="1"/>
</dbReference>
<dbReference type="Pfam" id="PF24621">
    <property type="entry name" value="DHQS_C"/>
    <property type="match status" value="1"/>
</dbReference>
<dbReference type="PIRSF" id="PIRSF001455">
    <property type="entry name" value="DHQ_synth"/>
    <property type="match status" value="1"/>
</dbReference>
<dbReference type="SUPFAM" id="SSF56796">
    <property type="entry name" value="Dehydroquinate synthase-like"/>
    <property type="match status" value="1"/>
</dbReference>